<organism>
    <name type="scientific">Chara vulgaris</name>
    <name type="common">Common stonewort</name>
    <dbReference type="NCBI Taxonomy" id="55564"/>
    <lineage>
        <taxon>Eukaryota</taxon>
        <taxon>Viridiplantae</taxon>
        <taxon>Streptophyta</taxon>
        <taxon>Charophyceae</taxon>
        <taxon>Charales</taxon>
        <taxon>Characeae</taxon>
        <taxon>Chara</taxon>
    </lineage>
</organism>
<accession>Q1ACH5</accession>
<keyword id="KW-0148">Chlorophyll</keyword>
<keyword id="KW-0150">Chloroplast</keyword>
<keyword id="KW-0157">Chromophore</keyword>
<keyword id="KW-0472">Membrane</keyword>
<keyword id="KW-0602">Photosynthesis</keyword>
<keyword id="KW-0604">Photosystem II</keyword>
<keyword id="KW-0934">Plastid</keyword>
<keyword id="KW-0793">Thylakoid</keyword>
<keyword id="KW-0812">Transmembrane</keyword>
<keyword id="KW-1133">Transmembrane helix</keyword>
<sequence length="508" mass="56618">MGLPWYRVHTVVLNDPGRLIAVHIMHTALVSGWAGSMALYELAVFDPSDPILDPMWRQGMFVIPFMTRLGITKSWGGWSITGETITNPGIWSYEGVAAVHIILSGLLFLAAIWHWVYWDLELFRDERTGKPALDLPKIFGIHLFLSGLLCFGFGAFHVTGLFGPGIWISDPYGITGKVQSVSPAWGAEGFDPFNPGGIASHHIAAGILGILAGLFHLSVRPPQRLYKALRMGNVETVLSSSIAAVFFAAFIVSGTMWYGSAATPIELFGPTRYQWDQGYFQQEIDRRVRLSTSQGFSISEAWSRIPEKLAFYDYIGNNPAKGGLFRAGPMDNGDGIAVGWLGHAVFKDKEGHELFVRRMPTFFETFPVVLVDEEGIIRADLPFRRAESKYSIEQVGVTVEFYGGELDNVSFSDPATVKKYARRAQLGEIFEFDRTTLKSDGVFRSSPRGWFTFGHLCFALLFFFGHIWHGARTLFRDVFAGIDPDIDSQIEFGIFQKLGDPTTKKQTV</sequence>
<geneLocation type="chloroplast"/>
<name>PSBB_CHAVU</name>
<dbReference type="EMBL" id="DQ229107">
    <property type="protein sequence ID" value="ABA61938.1"/>
    <property type="molecule type" value="Genomic_DNA"/>
</dbReference>
<dbReference type="RefSeq" id="YP_635772.1">
    <property type="nucleotide sequence ID" value="NC_008097.1"/>
</dbReference>
<dbReference type="SMR" id="Q1ACH5"/>
<dbReference type="GeneID" id="4100225"/>
<dbReference type="GO" id="GO:0009535">
    <property type="term" value="C:chloroplast thylakoid membrane"/>
    <property type="evidence" value="ECO:0007669"/>
    <property type="project" value="UniProtKB-SubCell"/>
</dbReference>
<dbReference type="GO" id="GO:0009523">
    <property type="term" value="C:photosystem II"/>
    <property type="evidence" value="ECO:0007669"/>
    <property type="project" value="UniProtKB-KW"/>
</dbReference>
<dbReference type="GO" id="GO:0016168">
    <property type="term" value="F:chlorophyll binding"/>
    <property type="evidence" value="ECO:0007669"/>
    <property type="project" value="UniProtKB-UniRule"/>
</dbReference>
<dbReference type="GO" id="GO:0045156">
    <property type="term" value="F:electron transporter, transferring electrons within the cyclic electron transport pathway of photosynthesis activity"/>
    <property type="evidence" value="ECO:0007669"/>
    <property type="project" value="InterPro"/>
</dbReference>
<dbReference type="GO" id="GO:0009772">
    <property type="term" value="P:photosynthetic electron transport in photosystem II"/>
    <property type="evidence" value="ECO:0007669"/>
    <property type="project" value="InterPro"/>
</dbReference>
<dbReference type="FunFam" id="3.10.680.10:FF:000001">
    <property type="entry name" value="Photosystem II CP47 reaction center protein"/>
    <property type="match status" value="1"/>
</dbReference>
<dbReference type="Gene3D" id="3.10.680.10">
    <property type="entry name" value="Photosystem II CP47 reaction center protein"/>
    <property type="match status" value="1"/>
</dbReference>
<dbReference type="HAMAP" id="MF_01495">
    <property type="entry name" value="PSII_PsbB_CP47"/>
    <property type="match status" value="1"/>
</dbReference>
<dbReference type="InterPro" id="IPR000932">
    <property type="entry name" value="PS_antenna-like"/>
</dbReference>
<dbReference type="InterPro" id="IPR036001">
    <property type="entry name" value="PS_II_antenna-like_sf"/>
</dbReference>
<dbReference type="InterPro" id="IPR017486">
    <property type="entry name" value="PSII_PsbB"/>
</dbReference>
<dbReference type="NCBIfam" id="TIGR03039">
    <property type="entry name" value="PS_II_CP47"/>
    <property type="match status" value="1"/>
</dbReference>
<dbReference type="PANTHER" id="PTHR33180">
    <property type="entry name" value="PHOTOSYSTEM II CP43 REACTION CENTER PROTEIN"/>
    <property type="match status" value="1"/>
</dbReference>
<dbReference type="PANTHER" id="PTHR33180:SF37">
    <property type="entry name" value="PHOTOSYSTEM II CP43 REACTION CENTER PROTEIN"/>
    <property type="match status" value="1"/>
</dbReference>
<dbReference type="Pfam" id="PF00421">
    <property type="entry name" value="PSII"/>
    <property type="match status" value="1"/>
</dbReference>
<dbReference type="SUPFAM" id="SSF161077">
    <property type="entry name" value="Photosystem II antenna protein-like"/>
    <property type="match status" value="1"/>
</dbReference>
<evidence type="ECO:0000255" key="1">
    <source>
        <dbReference type="HAMAP-Rule" id="MF_01495"/>
    </source>
</evidence>
<comment type="function">
    <text evidence="1">One of the components of the core complex of photosystem II (PSII). It binds chlorophyll and helps catalyze the primary light-induced photochemical processes of PSII. PSII is a light-driven water:plastoquinone oxidoreductase, using light energy to abstract electrons from H(2)O, generating O(2) and a proton gradient subsequently used for ATP formation.</text>
</comment>
<comment type="cofactor">
    <text evidence="1">Binds multiple chlorophylls. PSII binds additional chlorophylls, carotenoids and specific lipids.</text>
</comment>
<comment type="subunit">
    <text evidence="1">PSII is composed of 1 copy each of membrane proteins PsbA, PsbB, PsbC, PsbD, PsbE, PsbF, PsbH, PsbI, PsbJ, PsbK, PsbL, PsbM, PsbT, PsbX, PsbY, PsbZ, Psb30/Ycf12, at least 3 peripheral proteins of the oxygen-evolving complex and a large number of cofactors. It forms dimeric complexes.</text>
</comment>
<comment type="subcellular location">
    <subcellularLocation>
        <location evidence="1">Plastid</location>
        <location evidence="1">Chloroplast thylakoid membrane</location>
        <topology evidence="1">Multi-pass membrane protein</topology>
    </subcellularLocation>
</comment>
<comment type="similarity">
    <text evidence="1">Belongs to the PsbB/PsbC family. PsbB subfamily.</text>
</comment>
<protein>
    <recommendedName>
        <fullName evidence="1">Photosystem II CP47 reaction center protein</fullName>
    </recommendedName>
    <alternativeName>
        <fullName evidence="1">PSII 47 kDa protein</fullName>
    </alternativeName>
    <alternativeName>
        <fullName evidence="1">Protein CP-47</fullName>
    </alternativeName>
</protein>
<proteinExistence type="inferred from homology"/>
<reference key="1">
    <citation type="journal article" date="2006" name="Mol. Biol. Evol.">
        <title>The chloroplast genome sequence of Chara vulgaris sheds new light into the closest green algal relatives of land plants.</title>
        <authorList>
            <person name="Turmel M."/>
            <person name="Otis C."/>
            <person name="Lemieux C."/>
        </authorList>
    </citation>
    <scope>NUCLEOTIDE SEQUENCE [LARGE SCALE GENOMIC DNA]</scope>
</reference>
<gene>
    <name evidence="1" type="primary">psbB</name>
</gene>
<feature type="chain" id="PRO_0000359806" description="Photosystem II CP47 reaction center protein">
    <location>
        <begin position="1"/>
        <end position="508"/>
    </location>
</feature>
<feature type="transmembrane region" description="Helical" evidence="1">
    <location>
        <begin position="21"/>
        <end position="36"/>
    </location>
</feature>
<feature type="transmembrane region" description="Helical" evidence="1">
    <location>
        <begin position="101"/>
        <end position="115"/>
    </location>
</feature>
<feature type="transmembrane region" description="Helical" evidence="1">
    <location>
        <begin position="140"/>
        <end position="156"/>
    </location>
</feature>
<feature type="transmembrane region" description="Helical" evidence="1">
    <location>
        <begin position="203"/>
        <end position="218"/>
    </location>
</feature>
<feature type="transmembrane region" description="Helical" evidence="1">
    <location>
        <begin position="237"/>
        <end position="252"/>
    </location>
</feature>
<feature type="transmembrane region" description="Helical" evidence="1">
    <location>
        <begin position="457"/>
        <end position="472"/>
    </location>
</feature>